<keyword id="KW-0961">Cell wall biogenesis/degradation</keyword>
<keyword id="KW-0325">Glycoprotein</keyword>
<keyword id="KW-0328">Glycosyltransferase</keyword>
<keyword id="KW-0333">Golgi apparatus</keyword>
<keyword id="KW-0472">Membrane</keyword>
<keyword id="KW-1185">Reference proteome</keyword>
<keyword id="KW-0735">Signal-anchor</keyword>
<keyword id="KW-0808">Transferase</keyword>
<keyword id="KW-0812">Transmembrane</keyword>
<keyword id="KW-1133">Transmembrane helix</keyword>
<proteinExistence type="evidence at transcript level"/>
<evidence type="ECO:0000250" key="1"/>
<evidence type="ECO:0000255" key="2"/>
<evidence type="ECO:0000256" key="3">
    <source>
        <dbReference type="SAM" id="MobiDB-lite"/>
    </source>
</evidence>
<evidence type="ECO:0000269" key="4">
    <source>
    </source>
</evidence>
<evidence type="ECO:0000305" key="5"/>
<organism>
    <name type="scientific">Arabidopsis thaliana</name>
    <name type="common">Mouse-ear cress</name>
    <dbReference type="NCBI Taxonomy" id="3702"/>
    <lineage>
        <taxon>Eukaryota</taxon>
        <taxon>Viridiplantae</taxon>
        <taxon>Streptophyta</taxon>
        <taxon>Embryophyta</taxon>
        <taxon>Tracheophyta</taxon>
        <taxon>Spermatophyta</taxon>
        <taxon>Magnoliopsida</taxon>
        <taxon>eudicotyledons</taxon>
        <taxon>Gunneridae</taxon>
        <taxon>Pentapetalae</taxon>
        <taxon>rosids</taxon>
        <taxon>malvids</taxon>
        <taxon>Brassicales</taxon>
        <taxon>Brassicaceae</taxon>
        <taxon>Camelineae</taxon>
        <taxon>Arabidopsis</taxon>
    </lineage>
</organism>
<sequence length="610" mass="69886">MNQVRRWQRILILSLLLLSVLAPIVFVSNRLKSITSVDRGEFIEELSDITDKTEDELRLTAIEQDEEGLKEPKRILQDRDFNSVVLSNSSDKSNDTVQSNEGDQKNFLSEVDKGNNHKPKEEQAVSQKTTVSSNAEVKISARDIQLNHKTEFRPPSSKSEKNTRVQLERATDERVKEIRDKIIQAKAYLNLALPGNNSQIVKELRVRTKELERATGDTTKDKYLPKSSPNRLKAMEVALYKVSRAFHNCPAIATKLQAMTYKTEEQARAQKKQAAYLMQLAARTTPKGLHCLSMRLTTEYFTLDHEKRQLLQQSYNDPDLYHYVVFSDNVLASSVVVNSTISSSKEPDKIVFHVVTDSLNYPAISMWFLLNPSGRASIQILNIDEMNVLPLYHAELLMKQNSSDPRIISALNHARFYLPDIFPGLNKIVLFDHDVVVQRDLTRLWSLDMTGKVVGAVETCLEGDPSYRSMDSFINFSDAWVSQKFDPKACTWAFGMNLFDLEEWRRQELTSVYLKYFDLGVKGHLWKAGGLPVGWLTFFGQTFPLEKRWNVGGLGHESGLRASDIEQAAVIHYDGIMKPWLDIGIDKYKRYWNIHVPYHHPHLQRCNIHD</sequence>
<comment type="function">
    <text evidence="1">May be involved in pectin and/or xylans biosynthesis in cell walls.</text>
</comment>
<comment type="pathway">
    <text>Glycan metabolism; pectin biosynthesis.</text>
</comment>
<comment type="subcellular location">
    <subcellularLocation>
        <location evidence="1">Golgi apparatus membrane</location>
        <topology evidence="1">Single-pass type II membrane protein</topology>
    </subcellularLocation>
</comment>
<comment type="tissue specificity">
    <text evidence="4">Expressed in roots, inflorescences, siliques, leaves and stems.</text>
</comment>
<comment type="disruption phenotype">
    <text evidence="4">No changes in the cell wall content.</text>
</comment>
<comment type="similarity">
    <text evidence="5">Belongs to the glycosyltransferase 8 family.</text>
</comment>
<gene>
    <name type="primary">GAUT5</name>
    <name type="synonym">LGT5</name>
    <name type="ordered locus">At2g30575</name>
    <name type="ORF">T6B20</name>
</gene>
<feature type="chain" id="PRO_0000392558" description="Probable galacturonosyltransferase 5">
    <location>
        <begin position="1"/>
        <end position="610"/>
    </location>
</feature>
<feature type="topological domain" description="Cytoplasmic" evidence="2">
    <location>
        <begin position="1"/>
        <end position="6"/>
    </location>
</feature>
<feature type="transmembrane region" description="Helical; Signal-anchor for type II membrane protein" evidence="2">
    <location>
        <begin position="7"/>
        <end position="27"/>
    </location>
</feature>
<feature type="topological domain" description="Lumenal" evidence="2">
    <location>
        <begin position="28"/>
        <end position="610"/>
    </location>
</feature>
<feature type="region of interest" description="Disordered" evidence="3">
    <location>
        <begin position="86"/>
        <end position="170"/>
    </location>
</feature>
<feature type="compositionally biased region" description="Polar residues" evidence="3">
    <location>
        <begin position="86"/>
        <end position="101"/>
    </location>
</feature>
<feature type="compositionally biased region" description="Basic and acidic residues" evidence="3">
    <location>
        <begin position="110"/>
        <end position="123"/>
    </location>
</feature>
<feature type="compositionally biased region" description="Polar residues" evidence="3">
    <location>
        <begin position="124"/>
        <end position="135"/>
    </location>
</feature>
<feature type="compositionally biased region" description="Basic and acidic residues" evidence="3">
    <location>
        <begin position="139"/>
        <end position="170"/>
    </location>
</feature>
<feature type="glycosylation site" description="N-linked (GlcNAc...) asparagine" evidence="2">
    <location>
        <position position="88"/>
    </location>
</feature>
<feature type="glycosylation site" description="N-linked (GlcNAc...) asparagine" evidence="2">
    <location>
        <position position="94"/>
    </location>
</feature>
<feature type="glycosylation site" description="N-linked (GlcNAc...) asparagine" evidence="2">
    <location>
        <position position="196"/>
    </location>
</feature>
<feature type="glycosylation site" description="N-linked (GlcNAc...) asparagine" evidence="2">
    <location>
        <position position="338"/>
    </location>
</feature>
<feature type="glycosylation site" description="N-linked (GlcNAc...) asparagine" evidence="2">
    <location>
        <position position="401"/>
    </location>
</feature>
<feature type="glycosylation site" description="N-linked (GlcNAc...) asparagine" evidence="2">
    <location>
        <position position="475"/>
    </location>
</feature>
<name>GAUT5_ARATH</name>
<dbReference type="EC" id="2.4.1.-"/>
<dbReference type="EMBL" id="U93215">
    <property type="status" value="NOT_ANNOTATED_CDS"/>
    <property type="molecule type" value="Genomic_DNA"/>
</dbReference>
<dbReference type="EMBL" id="CP002685">
    <property type="protein sequence ID" value="AEC08410.1"/>
    <property type="molecule type" value="Genomic_DNA"/>
</dbReference>
<dbReference type="EMBL" id="AY081313">
    <property type="protein sequence ID" value="AAL91202.1"/>
    <property type="molecule type" value="mRNA"/>
</dbReference>
<dbReference type="EMBL" id="BT002563">
    <property type="protein sequence ID" value="AAO00923.1"/>
    <property type="molecule type" value="mRNA"/>
</dbReference>
<dbReference type="RefSeq" id="NP_850150.1">
    <property type="nucleotide sequence ID" value="NM_179819.2"/>
</dbReference>
<dbReference type="SMR" id="Q8RXE1"/>
<dbReference type="FunCoup" id="Q8RXE1">
    <property type="interactions" value="766"/>
</dbReference>
<dbReference type="STRING" id="3702.Q8RXE1"/>
<dbReference type="CAZy" id="GT8">
    <property type="family name" value="Glycosyltransferase Family 8"/>
</dbReference>
<dbReference type="GlyCosmos" id="Q8RXE1">
    <property type="glycosylation" value="6 sites, No reported glycans"/>
</dbReference>
<dbReference type="GlyGen" id="Q8RXE1">
    <property type="glycosylation" value="6 sites"/>
</dbReference>
<dbReference type="PaxDb" id="3702-AT2G30575.1"/>
<dbReference type="ProteomicsDB" id="221904"/>
<dbReference type="EnsemblPlants" id="AT2G30575.1">
    <property type="protein sequence ID" value="AT2G30575.1"/>
    <property type="gene ID" value="AT2G30575"/>
</dbReference>
<dbReference type="GeneID" id="817607"/>
<dbReference type="Gramene" id="AT2G30575.1">
    <property type="protein sequence ID" value="AT2G30575.1"/>
    <property type="gene ID" value="AT2G30575"/>
</dbReference>
<dbReference type="KEGG" id="ath:AT2G30575"/>
<dbReference type="Araport" id="AT2G30575"/>
<dbReference type="TAIR" id="AT2G30575">
    <property type="gene designation" value="LGT5"/>
</dbReference>
<dbReference type="eggNOG" id="ENOG502QT8Z">
    <property type="taxonomic scope" value="Eukaryota"/>
</dbReference>
<dbReference type="HOGENOM" id="CLU_010770_2_1_1"/>
<dbReference type="InParanoid" id="Q8RXE1"/>
<dbReference type="OMA" id="HKTEFRP"/>
<dbReference type="PhylomeDB" id="Q8RXE1"/>
<dbReference type="UniPathway" id="UPA00845"/>
<dbReference type="PRO" id="PR:Q8RXE1"/>
<dbReference type="Proteomes" id="UP000006548">
    <property type="component" value="Chromosome 2"/>
</dbReference>
<dbReference type="ExpressionAtlas" id="Q8RXE1">
    <property type="expression patterns" value="baseline and differential"/>
</dbReference>
<dbReference type="GO" id="GO:0005794">
    <property type="term" value="C:Golgi apparatus"/>
    <property type="evidence" value="ECO:0000314"/>
    <property type="project" value="TAIR"/>
</dbReference>
<dbReference type="GO" id="GO:0000139">
    <property type="term" value="C:Golgi membrane"/>
    <property type="evidence" value="ECO:0007669"/>
    <property type="project" value="UniProtKB-SubCell"/>
</dbReference>
<dbReference type="GO" id="GO:0047262">
    <property type="term" value="F:polygalacturonate 4-alpha-galacturonosyltransferase activity"/>
    <property type="evidence" value="ECO:0000250"/>
    <property type="project" value="TAIR"/>
</dbReference>
<dbReference type="GO" id="GO:0071555">
    <property type="term" value="P:cell wall organization"/>
    <property type="evidence" value="ECO:0007669"/>
    <property type="project" value="UniProtKB-KW"/>
</dbReference>
<dbReference type="GO" id="GO:0045489">
    <property type="term" value="P:pectin biosynthetic process"/>
    <property type="evidence" value="ECO:0007669"/>
    <property type="project" value="UniProtKB-UniPathway"/>
</dbReference>
<dbReference type="CDD" id="cd06429">
    <property type="entry name" value="GT8_like_1"/>
    <property type="match status" value="1"/>
</dbReference>
<dbReference type="FunFam" id="3.90.550.10:FF:000056">
    <property type="entry name" value="Hexosyltransferase"/>
    <property type="match status" value="1"/>
</dbReference>
<dbReference type="Gene3D" id="3.90.550.10">
    <property type="entry name" value="Spore Coat Polysaccharide Biosynthesis Protein SpsA, Chain A"/>
    <property type="match status" value="1"/>
</dbReference>
<dbReference type="InterPro" id="IPR029993">
    <property type="entry name" value="GAUT"/>
</dbReference>
<dbReference type="InterPro" id="IPR002495">
    <property type="entry name" value="Glyco_trans_8"/>
</dbReference>
<dbReference type="InterPro" id="IPR029044">
    <property type="entry name" value="Nucleotide-diphossugar_trans"/>
</dbReference>
<dbReference type="PANTHER" id="PTHR32116">
    <property type="entry name" value="GALACTURONOSYLTRANSFERASE 4-RELATED"/>
    <property type="match status" value="1"/>
</dbReference>
<dbReference type="PANTHER" id="PTHR32116:SF66">
    <property type="entry name" value="GALACTURONOSYLTRANSFERASE 5-RELATED"/>
    <property type="match status" value="1"/>
</dbReference>
<dbReference type="Pfam" id="PF01501">
    <property type="entry name" value="Glyco_transf_8"/>
    <property type="match status" value="1"/>
</dbReference>
<dbReference type="SUPFAM" id="SSF53448">
    <property type="entry name" value="Nucleotide-diphospho-sugar transferases"/>
    <property type="match status" value="1"/>
</dbReference>
<reference key="1">
    <citation type="journal article" date="1999" name="Nature">
        <title>Sequence and analysis of chromosome 2 of the plant Arabidopsis thaliana.</title>
        <authorList>
            <person name="Lin X."/>
            <person name="Kaul S."/>
            <person name="Rounsley S.D."/>
            <person name="Shea T.P."/>
            <person name="Benito M.-I."/>
            <person name="Town C.D."/>
            <person name="Fujii C.Y."/>
            <person name="Mason T.M."/>
            <person name="Bowman C.L."/>
            <person name="Barnstead M.E."/>
            <person name="Feldblyum T.V."/>
            <person name="Buell C.R."/>
            <person name="Ketchum K.A."/>
            <person name="Lee J.J."/>
            <person name="Ronning C.M."/>
            <person name="Koo H.L."/>
            <person name="Moffat K.S."/>
            <person name="Cronin L.A."/>
            <person name="Shen M."/>
            <person name="Pai G."/>
            <person name="Van Aken S."/>
            <person name="Umayam L."/>
            <person name="Tallon L.J."/>
            <person name="Gill J.E."/>
            <person name="Adams M.D."/>
            <person name="Carrera A.J."/>
            <person name="Creasy T.H."/>
            <person name="Goodman H.M."/>
            <person name="Somerville C.R."/>
            <person name="Copenhaver G.P."/>
            <person name="Preuss D."/>
            <person name="Nierman W.C."/>
            <person name="White O."/>
            <person name="Eisen J.A."/>
            <person name="Salzberg S.L."/>
            <person name="Fraser C.M."/>
            <person name="Venter J.C."/>
        </authorList>
    </citation>
    <scope>NUCLEOTIDE SEQUENCE [LARGE SCALE GENOMIC DNA]</scope>
    <source>
        <strain>cv. Columbia</strain>
    </source>
</reference>
<reference key="2">
    <citation type="journal article" date="2017" name="Plant J.">
        <title>Araport11: a complete reannotation of the Arabidopsis thaliana reference genome.</title>
        <authorList>
            <person name="Cheng C.Y."/>
            <person name="Krishnakumar V."/>
            <person name="Chan A.P."/>
            <person name="Thibaud-Nissen F."/>
            <person name="Schobel S."/>
            <person name="Town C.D."/>
        </authorList>
    </citation>
    <scope>GENOME REANNOTATION</scope>
    <source>
        <strain>cv. Columbia</strain>
    </source>
</reference>
<reference key="3">
    <citation type="journal article" date="2003" name="Science">
        <title>Empirical analysis of transcriptional activity in the Arabidopsis genome.</title>
        <authorList>
            <person name="Yamada K."/>
            <person name="Lim J."/>
            <person name="Dale J.M."/>
            <person name="Chen H."/>
            <person name="Shinn P."/>
            <person name="Palm C.J."/>
            <person name="Southwick A.M."/>
            <person name="Wu H.C."/>
            <person name="Kim C.J."/>
            <person name="Nguyen M."/>
            <person name="Pham P.K."/>
            <person name="Cheuk R.F."/>
            <person name="Karlin-Newmann G."/>
            <person name="Liu S.X."/>
            <person name="Lam B."/>
            <person name="Sakano H."/>
            <person name="Wu T."/>
            <person name="Yu G."/>
            <person name="Miranda M."/>
            <person name="Quach H.L."/>
            <person name="Tripp M."/>
            <person name="Chang C.H."/>
            <person name="Lee J.M."/>
            <person name="Toriumi M.J."/>
            <person name="Chan M.M."/>
            <person name="Tang C.C."/>
            <person name="Onodera C.S."/>
            <person name="Deng J.M."/>
            <person name="Akiyama K."/>
            <person name="Ansari Y."/>
            <person name="Arakawa T."/>
            <person name="Banh J."/>
            <person name="Banno F."/>
            <person name="Bowser L."/>
            <person name="Brooks S.Y."/>
            <person name="Carninci P."/>
            <person name="Chao Q."/>
            <person name="Choy N."/>
            <person name="Enju A."/>
            <person name="Goldsmith A.D."/>
            <person name="Gurjal M."/>
            <person name="Hansen N.F."/>
            <person name="Hayashizaki Y."/>
            <person name="Johnson-Hopson C."/>
            <person name="Hsuan V.W."/>
            <person name="Iida K."/>
            <person name="Karnes M."/>
            <person name="Khan S."/>
            <person name="Koesema E."/>
            <person name="Ishida J."/>
            <person name="Jiang P.X."/>
            <person name="Jones T."/>
            <person name="Kawai J."/>
            <person name="Kamiya A."/>
            <person name="Meyers C."/>
            <person name="Nakajima M."/>
            <person name="Narusaka M."/>
            <person name="Seki M."/>
            <person name="Sakurai T."/>
            <person name="Satou M."/>
            <person name="Tamse R."/>
            <person name="Vaysberg M."/>
            <person name="Wallender E.K."/>
            <person name="Wong C."/>
            <person name="Yamamura Y."/>
            <person name="Yuan S."/>
            <person name="Shinozaki K."/>
            <person name="Davis R.W."/>
            <person name="Theologis A."/>
            <person name="Ecker J.R."/>
        </authorList>
    </citation>
    <scope>NUCLEOTIDE SEQUENCE [LARGE SCALE MRNA]</scope>
    <source>
        <strain>cv. Columbia</strain>
    </source>
</reference>
<reference key="4">
    <citation type="journal article" date="2000" name="Plant Mol. Biol.">
        <title>Organization and structural evolution of four multigene families in Arabidopsis thaliana: AtLCAD, AtLGT, AtMYST and AtHD-GL2.</title>
        <authorList>
            <person name="Tavares R."/>
            <person name="Aubourg S."/>
            <person name="Lecharny A."/>
            <person name="Kreis M."/>
        </authorList>
    </citation>
    <scope>GENE FAMILY</scope>
    <scope>NOMENCLATURE</scope>
</reference>
<reference key="5">
    <citation type="journal article" date="2006" name="Proc. Natl. Acad. Sci. U.S.A.">
        <title>Functional identification of an Arabidopsis pectin biosynthetic homogalacturonan galacturonosyltransferase.</title>
        <authorList>
            <person name="Sterling J.D."/>
            <person name="Atmodjo M.A."/>
            <person name="Inwood S.E."/>
            <person name="Kumar Kolli V.S."/>
            <person name="Quigley H.F."/>
            <person name="Hahn M.G."/>
            <person name="Mohnen D."/>
        </authorList>
    </citation>
    <scope>GENE FAMILY</scope>
    <scope>NOMENCLATURE</scope>
</reference>
<reference key="6">
    <citation type="journal article" date="2009" name="Mol. Plant">
        <title>Arabidopsis thaliana T-DNA mutants implicate GAUT genes in the biosynthesis of pectin and xylan in cell walls and seed testa.</title>
        <authorList>
            <person name="Caffall K.H."/>
            <person name="Pattathil S."/>
            <person name="Phillips S.E."/>
            <person name="Hahn M.G."/>
            <person name="Mohnen D."/>
        </authorList>
    </citation>
    <scope>TISSUE SPECIFICITY</scope>
    <scope>DISRUPTION PHENOTYPE</scope>
</reference>
<accession>Q8RXE1</accession>
<protein>
    <recommendedName>
        <fullName>Probable galacturonosyltransferase 5</fullName>
        <ecNumber>2.4.1.-</ecNumber>
    </recommendedName>
    <alternativeName>
        <fullName>Like glycosyl transferase 5</fullName>
    </alternativeName>
</protein>